<gene>
    <name evidence="1" type="primary">eno</name>
    <name type="ordered locus">llmg_0617</name>
</gene>
<name>ENO_LACLM</name>
<dbReference type="EC" id="4.2.1.11" evidence="1"/>
<dbReference type="EMBL" id="AM406671">
    <property type="protein sequence ID" value="CAL97218.1"/>
    <property type="molecule type" value="Genomic_DNA"/>
</dbReference>
<dbReference type="RefSeq" id="WP_010905473.1">
    <property type="nucleotide sequence ID" value="NZ_WJVF01000050.1"/>
</dbReference>
<dbReference type="SMR" id="A2RIX1"/>
<dbReference type="STRING" id="416870.llmg_0617"/>
<dbReference type="GeneID" id="89632758"/>
<dbReference type="KEGG" id="llm:llmg_0617"/>
<dbReference type="eggNOG" id="COG0148">
    <property type="taxonomic scope" value="Bacteria"/>
</dbReference>
<dbReference type="HOGENOM" id="CLU_031223_2_1_9"/>
<dbReference type="OrthoDB" id="9804716at2"/>
<dbReference type="PhylomeDB" id="A2RIX1"/>
<dbReference type="UniPathway" id="UPA00109">
    <property type="reaction ID" value="UER00187"/>
</dbReference>
<dbReference type="Proteomes" id="UP000000364">
    <property type="component" value="Chromosome"/>
</dbReference>
<dbReference type="GO" id="GO:0009986">
    <property type="term" value="C:cell surface"/>
    <property type="evidence" value="ECO:0007669"/>
    <property type="project" value="UniProtKB-SubCell"/>
</dbReference>
<dbReference type="GO" id="GO:0005576">
    <property type="term" value="C:extracellular region"/>
    <property type="evidence" value="ECO:0007669"/>
    <property type="project" value="UniProtKB-SubCell"/>
</dbReference>
<dbReference type="GO" id="GO:0009274">
    <property type="term" value="C:peptidoglycan-based cell wall"/>
    <property type="evidence" value="ECO:0007669"/>
    <property type="project" value="UniProtKB-ARBA"/>
</dbReference>
<dbReference type="GO" id="GO:0000015">
    <property type="term" value="C:phosphopyruvate hydratase complex"/>
    <property type="evidence" value="ECO:0007669"/>
    <property type="project" value="InterPro"/>
</dbReference>
<dbReference type="GO" id="GO:0000287">
    <property type="term" value="F:magnesium ion binding"/>
    <property type="evidence" value="ECO:0007669"/>
    <property type="project" value="UniProtKB-UniRule"/>
</dbReference>
<dbReference type="GO" id="GO:0004634">
    <property type="term" value="F:phosphopyruvate hydratase activity"/>
    <property type="evidence" value="ECO:0007669"/>
    <property type="project" value="UniProtKB-UniRule"/>
</dbReference>
<dbReference type="GO" id="GO:0006096">
    <property type="term" value="P:glycolytic process"/>
    <property type="evidence" value="ECO:0007669"/>
    <property type="project" value="UniProtKB-UniRule"/>
</dbReference>
<dbReference type="CDD" id="cd03313">
    <property type="entry name" value="enolase"/>
    <property type="match status" value="1"/>
</dbReference>
<dbReference type="FunFam" id="3.20.20.120:FF:000001">
    <property type="entry name" value="Enolase"/>
    <property type="match status" value="1"/>
</dbReference>
<dbReference type="FunFam" id="3.30.390.10:FF:000001">
    <property type="entry name" value="Enolase"/>
    <property type="match status" value="1"/>
</dbReference>
<dbReference type="Gene3D" id="3.20.20.120">
    <property type="entry name" value="Enolase-like C-terminal domain"/>
    <property type="match status" value="1"/>
</dbReference>
<dbReference type="Gene3D" id="3.30.390.10">
    <property type="entry name" value="Enolase-like, N-terminal domain"/>
    <property type="match status" value="1"/>
</dbReference>
<dbReference type="HAMAP" id="MF_00318">
    <property type="entry name" value="Enolase"/>
    <property type="match status" value="1"/>
</dbReference>
<dbReference type="InterPro" id="IPR000941">
    <property type="entry name" value="Enolase"/>
</dbReference>
<dbReference type="InterPro" id="IPR036849">
    <property type="entry name" value="Enolase-like_C_sf"/>
</dbReference>
<dbReference type="InterPro" id="IPR029017">
    <property type="entry name" value="Enolase-like_N"/>
</dbReference>
<dbReference type="InterPro" id="IPR020810">
    <property type="entry name" value="Enolase_C"/>
</dbReference>
<dbReference type="InterPro" id="IPR020809">
    <property type="entry name" value="Enolase_CS"/>
</dbReference>
<dbReference type="InterPro" id="IPR020811">
    <property type="entry name" value="Enolase_N"/>
</dbReference>
<dbReference type="NCBIfam" id="TIGR01060">
    <property type="entry name" value="eno"/>
    <property type="match status" value="1"/>
</dbReference>
<dbReference type="PANTHER" id="PTHR11902">
    <property type="entry name" value="ENOLASE"/>
    <property type="match status" value="1"/>
</dbReference>
<dbReference type="PANTHER" id="PTHR11902:SF1">
    <property type="entry name" value="ENOLASE"/>
    <property type="match status" value="1"/>
</dbReference>
<dbReference type="Pfam" id="PF00113">
    <property type="entry name" value="Enolase_C"/>
    <property type="match status" value="1"/>
</dbReference>
<dbReference type="Pfam" id="PF03952">
    <property type="entry name" value="Enolase_N"/>
    <property type="match status" value="1"/>
</dbReference>
<dbReference type="PIRSF" id="PIRSF001400">
    <property type="entry name" value="Enolase"/>
    <property type="match status" value="1"/>
</dbReference>
<dbReference type="PRINTS" id="PR00148">
    <property type="entry name" value="ENOLASE"/>
</dbReference>
<dbReference type="SFLD" id="SFLDS00001">
    <property type="entry name" value="Enolase"/>
    <property type="match status" value="1"/>
</dbReference>
<dbReference type="SFLD" id="SFLDF00002">
    <property type="entry name" value="enolase"/>
    <property type="match status" value="1"/>
</dbReference>
<dbReference type="SMART" id="SM01192">
    <property type="entry name" value="Enolase_C"/>
    <property type="match status" value="1"/>
</dbReference>
<dbReference type="SMART" id="SM01193">
    <property type="entry name" value="Enolase_N"/>
    <property type="match status" value="1"/>
</dbReference>
<dbReference type="SUPFAM" id="SSF51604">
    <property type="entry name" value="Enolase C-terminal domain-like"/>
    <property type="match status" value="1"/>
</dbReference>
<dbReference type="SUPFAM" id="SSF54826">
    <property type="entry name" value="Enolase N-terminal domain-like"/>
    <property type="match status" value="1"/>
</dbReference>
<dbReference type="PROSITE" id="PS00164">
    <property type="entry name" value="ENOLASE"/>
    <property type="match status" value="1"/>
</dbReference>
<accession>A2RIX1</accession>
<keyword id="KW-0963">Cytoplasm</keyword>
<keyword id="KW-0324">Glycolysis</keyword>
<keyword id="KW-0456">Lyase</keyword>
<keyword id="KW-0460">Magnesium</keyword>
<keyword id="KW-0479">Metal-binding</keyword>
<keyword id="KW-0964">Secreted</keyword>
<proteinExistence type="inferred from homology"/>
<feature type="chain" id="PRO_1000019216" description="Enolase">
    <location>
        <begin position="1"/>
        <end position="433"/>
    </location>
</feature>
<feature type="region of interest" description="Disordered" evidence="2">
    <location>
        <begin position="34"/>
        <end position="56"/>
    </location>
</feature>
<feature type="compositionally biased region" description="Basic and acidic residues" evidence="2">
    <location>
        <begin position="44"/>
        <end position="56"/>
    </location>
</feature>
<feature type="active site" description="Proton donor" evidence="1">
    <location>
        <position position="205"/>
    </location>
</feature>
<feature type="active site" description="Proton acceptor" evidence="1">
    <location>
        <position position="342"/>
    </location>
</feature>
<feature type="binding site" evidence="1">
    <location>
        <position position="163"/>
    </location>
    <ligand>
        <name>(2R)-2-phosphoglycerate</name>
        <dbReference type="ChEBI" id="CHEBI:58289"/>
    </ligand>
</feature>
<feature type="binding site" evidence="1">
    <location>
        <position position="243"/>
    </location>
    <ligand>
        <name>Mg(2+)</name>
        <dbReference type="ChEBI" id="CHEBI:18420"/>
    </ligand>
</feature>
<feature type="binding site" evidence="1">
    <location>
        <position position="290"/>
    </location>
    <ligand>
        <name>Mg(2+)</name>
        <dbReference type="ChEBI" id="CHEBI:18420"/>
    </ligand>
</feature>
<feature type="binding site" evidence="1">
    <location>
        <position position="317"/>
    </location>
    <ligand>
        <name>Mg(2+)</name>
        <dbReference type="ChEBI" id="CHEBI:18420"/>
    </ligand>
</feature>
<feature type="binding site" evidence="1">
    <location>
        <position position="342"/>
    </location>
    <ligand>
        <name>(2R)-2-phosphoglycerate</name>
        <dbReference type="ChEBI" id="CHEBI:58289"/>
    </ligand>
</feature>
<feature type="binding site" evidence="1">
    <location>
        <position position="371"/>
    </location>
    <ligand>
        <name>(2R)-2-phosphoglycerate</name>
        <dbReference type="ChEBI" id="CHEBI:58289"/>
    </ligand>
</feature>
<feature type="binding site" evidence="1">
    <location>
        <position position="372"/>
    </location>
    <ligand>
        <name>(2R)-2-phosphoglycerate</name>
        <dbReference type="ChEBI" id="CHEBI:58289"/>
    </ligand>
</feature>
<feature type="binding site" evidence="1">
    <location>
        <position position="393"/>
    </location>
    <ligand>
        <name>(2R)-2-phosphoglycerate</name>
        <dbReference type="ChEBI" id="CHEBI:58289"/>
    </ligand>
</feature>
<organism>
    <name type="scientific">Lactococcus lactis subsp. cremoris (strain MG1363)</name>
    <dbReference type="NCBI Taxonomy" id="416870"/>
    <lineage>
        <taxon>Bacteria</taxon>
        <taxon>Bacillati</taxon>
        <taxon>Bacillota</taxon>
        <taxon>Bacilli</taxon>
        <taxon>Lactobacillales</taxon>
        <taxon>Streptococcaceae</taxon>
        <taxon>Lactococcus</taxon>
        <taxon>Lactococcus cremoris subsp. cremoris</taxon>
    </lineage>
</organism>
<reference key="1">
    <citation type="journal article" date="2007" name="J. Bacteriol.">
        <title>The complete genome sequence of the lactic acid bacterial paradigm Lactococcus lactis subsp. cremoris MG1363.</title>
        <authorList>
            <person name="Wegmann U."/>
            <person name="O'Connell-Motherway M."/>
            <person name="Zomer A."/>
            <person name="Buist G."/>
            <person name="Shearman C."/>
            <person name="Canchaya C."/>
            <person name="Ventura M."/>
            <person name="Goesmann A."/>
            <person name="Gasson M.J."/>
            <person name="Kuipers O.P."/>
            <person name="van Sinderen D."/>
            <person name="Kok J."/>
        </authorList>
    </citation>
    <scope>NUCLEOTIDE SEQUENCE [LARGE SCALE GENOMIC DNA]</scope>
    <source>
        <strain>MG1363</strain>
    </source>
</reference>
<comment type="function">
    <text evidence="1">Catalyzes the reversible conversion of 2-phosphoglycerate (2-PG) into phosphoenolpyruvate (PEP). It is essential for the degradation of carbohydrates via glycolysis.</text>
</comment>
<comment type="catalytic activity">
    <reaction evidence="1">
        <text>(2R)-2-phosphoglycerate = phosphoenolpyruvate + H2O</text>
        <dbReference type="Rhea" id="RHEA:10164"/>
        <dbReference type="ChEBI" id="CHEBI:15377"/>
        <dbReference type="ChEBI" id="CHEBI:58289"/>
        <dbReference type="ChEBI" id="CHEBI:58702"/>
        <dbReference type="EC" id="4.2.1.11"/>
    </reaction>
</comment>
<comment type="cofactor">
    <cofactor evidence="1">
        <name>Mg(2+)</name>
        <dbReference type="ChEBI" id="CHEBI:18420"/>
    </cofactor>
    <text evidence="1">Binds a second Mg(2+) ion via substrate during catalysis.</text>
</comment>
<comment type="pathway">
    <text evidence="1">Carbohydrate degradation; glycolysis; pyruvate from D-glyceraldehyde 3-phosphate: step 4/5.</text>
</comment>
<comment type="subcellular location">
    <subcellularLocation>
        <location evidence="1">Cytoplasm</location>
    </subcellularLocation>
    <subcellularLocation>
        <location evidence="1">Secreted</location>
    </subcellularLocation>
    <subcellularLocation>
        <location evidence="1">Cell surface</location>
    </subcellularLocation>
    <text evidence="1">Fractions of enolase are present in both the cytoplasm and on the cell surface.</text>
</comment>
<comment type="similarity">
    <text evidence="1">Belongs to the enolase family.</text>
</comment>
<protein>
    <recommendedName>
        <fullName evidence="1">Enolase</fullName>
        <ecNumber evidence="1">4.2.1.11</ecNumber>
    </recommendedName>
    <alternativeName>
        <fullName evidence="1">2-phospho-D-glycerate hydro-lyase</fullName>
    </alternativeName>
    <alternativeName>
        <fullName evidence="1">2-phosphoglycerate dehydratase</fullName>
    </alternativeName>
</protein>
<evidence type="ECO:0000255" key="1">
    <source>
        <dbReference type="HAMAP-Rule" id="MF_00318"/>
    </source>
</evidence>
<evidence type="ECO:0000256" key="2">
    <source>
        <dbReference type="SAM" id="MobiDB-lite"/>
    </source>
</evidence>
<sequence>MSIITDIYAREVLDSRGNPTLEVEVYTEDGAFGRGMVPSGASTGEHEAVELRDGDKSRYNGLGTQKAVDNVNNIIAEAIIGYEVTDQQAIDRAMIALDGTENKGKLGANAILGVSIAAARAAADELGVPLYNYLGGFNAKVLPTPMMNIINGGSHSDAPIAFQEFMIVPVGAPTFKEALRWGAEIFHALKKILKARGLETAVGDEGGFAPKFDGTEDGVETILKAIEAAGYKAGEDGVMIGFDCASSEFYENGVYDYTKFEGEGGKKLSASEQVDYLEELVSKYPIITIEDGMDENDWDGWKILTERLGKKVQLVGDDFFVTNTKYLERGIRENASNAILIKVNQIGTLTETFEAIEMAKEAGFTAIVSHRSGETEDSTISDIAVATNAGQIKTGSLSRTDRMAKYNQLLRIEDQLAEVAQYKGLKAFYNLKK</sequence>